<accession>P0C296</accession>
<organism>
    <name type="scientific">Androctonus crassicauda</name>
    <name type="common">Arabian fat-tailed scorpion</name>
    <dbReference type="NCBI Taxonomy" id="122909"/>
    <lineage>
        <taxon>Eukaryota</taxon>
        <taxon>Metazoa</taxon>
        <taxon>Ecdysozoa</taxon>
        <taxon>Arthropoda</taxon>
        <taxon>Chelicerata</taxon>
        <taxon>Arachnida</taxon>
        <taxon>Scorpiones</taxon>
        <taxon>Buthida</taxon>
        <taxon>Buthoidea</taxon>
        <taxon>Buthidae</taxon>
        <taxon>Androctonus</taxon>
    </lineage>
</organism>
<reference key="1">
    <citation type="journal article" date="2006" name="Toxicon">
        <title>Characterization of venom components from the scorpion Androctonus crassicauda of Turkey: peptides and genes.</title>
        <authorList>
            <person name="Caliskan F."/>
            <person name="Garcia B.I."/>
            <person name="Coronas F.I.V."/>
            <person name="Batista C.V.F."/>
            <person name="Zamudio F.Z."/>
            <person name="Possani L.D."/>
        </authorList>
    </citation>
    <scope>NUCLEOTIDE SEQUENCE [MRNA]</scope>
    <source>
        <tissue>Venom gland</tissue>
    </source>
</reference>
<proteinExistence type="evidence at transcript level"/>
<name>TX22_ANDCR</name>
<sequence>ADVPGNYPLNTNGNMYYCTILGENEFCRKVCKVHGVKYGYCFNSHCWCEYLEAKDVSVWNAAKNYCKNPVGK</sequence>
<protein>
    <recommendedName>
        <fullName>Toxin Acra II-2</fullName>
    </recommendedName>
</protein>
<dbReference type="SMR" id="P0C296"/>
<dbReference type="GO" id="GO:0005576">
    <property type="term" value="C:extracellular region"/>
    <property type="evidence" value="ECO:0007669"/>
    <property type="project" value="UniProtKB-SubCell"/>
</dbReference>
<dbReference type="GO" id="GO:0019871">
    <property type="term" value="F:sodium channel inhibitor activity"/>
    <property type="evidence" value="ECO:0007669"/>
    <property type="project" value="InterPro"/>
</dbReference>
<dbReference type="GO" id="GO:0090729">
    <property type="term" value="F:toxin activity"/>
    <property type="evidence" value="ECO:0007669"/>
    <property type="project" value="UniProtKB-KW"/>
</dbReference>
<dbReference type="CDD" id="cd23106">
    <property type="entry name" value="neurotoxins_LC_scorpion"/>
    <property type="match status" value="1"/>
</dbReference>
<dbReference type="Gene3D" id="3.30.30.10">
    <property type="entry name" value="Knottin, scorpion toxin-like"/>
    <property type="match status" value="1"/>
</dbReference>
<dbReference type="InterPro" id="IPR044062">
    <property type="entry name" value="LCN-type_CS_alpha_beta_dom"/>
</dbReference>
<dbReference type="InterPro" id="IPR036574">
    <property type="entry name" value="Scorpion_toxin-like_sf"/>
</dbReference>
<dbReference type="InterPro" id="IPR002061">
    <property type="entry name" value="Scorpion_toxinL/defensin"/>
</dbReference>
<dbReference type="Pfam" id="PF00537">
    <property type="entry name" value="Toxin_3"/>
    <property type="match status" value="1"/>
</dbReference>
<dbReference type="SUPFAM" id="SSF57095">
    <property type="entry name" value="Scorpion toxin-like"/>
    <property type="match status" value="1"/>
</dbReference>
<dbReference type="PROSITE" id="PS51863">
    <property type="entry name" value="LCN_CSAB"/>
    <property type="match status" value="1"/>
</dbReference>
<feature type="chain" id="PRO_0000271323" description="Toxin Acra II-2">
    <location>
        <begin position="1"/>
        <end position="72"/>
    </location>
</feature>
<feature type="domain" description="LCN-type CS-alpha/beta" evidence="2">
    <location>
        <begin position="3"/>
        <end position="67"/>
    </location>
</feature>
<feature type="disulfide bond" evidence="2">
    <location>
        <begin position="18"/>
        <end position="41"/>
    </location>
</feature>
<feature type="disulfide bond" evidence="2">
    <location>
        <begin position="27"/>
        <end position="46"/>
    </location>
</feature>
<feature type="disulfide bond" evidence="2">
    <location>
        <begin position="31"/>
        <end position="48"/>
    </location>
</feature>
<comment type="function">
    <text evidence="1">Binds to sodium channels (Nav) and affects the channel activation process.</text>
</comment>
<comment type="subcellular location">
    <subcellularLocation>
        <location evidence="1">Secreted</location>
    </subcellularLocation>
</comment>
<comment type="tissue specificity">
    <text>Expressed by the venom gland.</text>
</comment>
<comment type="domain">
    <text evidence="3">Has the structural arrangement of an alpha-helix connected to antiparallel beta-sheets by disulfide bonds (CS-alpha/beta).</text>
</comment>
<comment type="similarity">
    <text evidence="3">Belongs to the long (3 C-C) scorpion toxin superfamily. Sodium channel inhibitor family. Beta subfamily.</text>
</comment>
<keyword id="KW-1015">Disulfide bond</keyword>
<keyword id="KW-0872">Ion channel impairing toxin</keyword>
<keyword id="KW-0528">Neurotoxin</keyword>
<keyword id="KW-0964">Secreted</keyword>
<keyword id="KW-0800">Toxin</keyword>
<keyword id="KW-0738">Voltage-gated sodium channel impairing toxin</keyword>
<evidence type="ECO:0000250" key="1"/>
<evidence type="ECO:0000255" key="2">
    <source>
        <dbReference type="PROSITE-ProRule" id="PRU01210"/>
    </source>
</evidence>
<evidence type="ECO:0000305" key="3"/>